<protein>
    <recommendedName>
        <fullName evidence="1">GTP cyclohydrolase FolE2</fullName>
        <ecNumber evidence="1">3.5.4.16</ecNumber>
    </recommendedName>
</protein>
<gene>
    <name evidence="1" type="primary">folE2</name>
    <name type="ordered locus">SAS0524</name>
</gene>
<organism>
    <name type="scientific">Staphylococcus aureus (strain MSSA476)</name>
    <dbReference type="NCBI Taxonomy" id="282459"/>
    <lineage>
        <taxon>Bacteria</taxon>
        <taxon>Bacillati</taxon>
        <taxon>Bacillota</taxon>
        <taxon>Bacilli</taxon>
        <taxon>Bacillales</taxon>
        <taxon>Staphylococcaceae</taxon>
        <taxon>Staphylococcus</taxon>
    </lineage>
</organism>
<sequence length="292" mass="33482">MTEFDLSTREGRWKHFGSVDPIEGTKPTTKNEMTDLQSTHKDFLFEIEEVGIKNLVYPVLVDQYQTAGTFSFSTSLTKDEKGINMSRIIESVEKHYDNGIELEFNTLYQVLRTLQTNMKQNAAGVDVSGKWFFDRYSPTTNIKAVGNADVTYGLAIDGDKVTRKELTIEATVTTLCPCSKEISEYSAHNQRGVVTVKTYINKDQDIVDDYKNKILDAMEANASSILYPILKRPDEKRVTERAYENPRFVEDLIRLIAADLVEFDWLDGFDIECRNEESIHQHDAFAKLKYRK</sequence>
<evidence type="ECO:0000255" key="1">
    <source>
        <dbReference type="HAMAP-Rule" id="MF_01527"/>
    </source>
</evidence>
<feature type="chain" id="PRO_0000147728" description="GTP cyclohydrolase FolE2">
    <location>
        <begin position="1"/>
        <end position="292"/>
    </location>
</feature>
<feature type="site" description="May be catalytically important" evidence="1">
    <location>
        <position position="176"/>
    </location>
</feature>
<keyword id="KW-0378">Hydrolase</keyword>
<dbReference type="EC" id="3.5.4.16" evidence="1"/>
<dbReference type="EMBL" id="BX571857">
    <property type="protein sequence ID" value="CAG42299.1"/>
    <property type="molecule type" value="Genomic_DNA"/>
</dbReference>
<dbReference type="RefSeq" id="WP_000134232.1">
    <property type="nucleotide sequence ID" value="NC_002953.3"/>
</dbReference>
<dbReference type="SMR" id="Q6GBS1"/>
<dbReference type="KEGG" id="sas:SAS0524"/>
<dbReference type="HOGENOM" id="CLU_062816_1_1_9"/>
<dbReference type="UniPathway" id="UPA00848">
    <property type="reaction ID" value="UER00151"/>
</dbReference>
<dbReference type="GO" id="GO:0003934">
    <property type="term" value="F:GTP cyclohydrolase I activity"/>
    <property type="evidence" value="ECO:0007669"/>
    <property type="project" value="UniProtKB-UniRule"/>
</dbReference>
<dbReference type="GO" id="GO:0046654">
    <property type="term" value="P:tetrahydrofolate biosynthetic process"/>
    <property type="evidence" value="ECO:0007669"/>
    <property type="project" value="UniProtKB-UniRule"/>
</dbReference>
<dbReference type="Gene3D" id="3.10.270.10">
    <property type="entry name" value="Urate Oxidase"/>
    <property type="match status" value="1"/>
</dbReference>
<dbReference type="HAMAP" id="MF_01527_B">
    <property type="entry name" value="GTP_cyclohydrol_B"/>
    <property type="match status" value="1"/>
</dbReference>
<dbReference type="InterPro" id="IPR022838">
    <property type="entry name" value="GTP_cyclohydrolase_FolE2"/>
</dbReference>
<dbReference type="InterPro" id="IPR003801">
    <property type="entry name" value="GTP_cyclohydrolase_FolE2/MptA"/>
</dbReference>
<dbReference type="NCBIfam" id="NF010200">
    <property type="entry name" value="PRK13674.1-1"/>
    <property type="match status" value="1"/>
</dbReference>
<dbReference type="PANTHER" id="PTHR36445">
    <property type="entry name" value="GTP CYCLOHYDROLASE MPTA"/>
    <property type="match status" value="1"/>
</dbReference>
<dbReference type="PANTHER" id="PTHR36445:SF1">
    <property type="entry name" value="GTP CYCLOHYDROLASE MPTA"/>
    <property type="match status" value="1"/>
</dbReference>
<dbReference type="Pfam" id="PF02649">
    <property type="entry name" value="GCHY-1"/>
    <property type="match status" value="1"/>
</dbReference>
<name>GCH4_STAAS</name>
<proteinExistence type="inferred from homology"/>
<comment type="function">
    <text evidence="1">Converts GTP to 7,8-dihydroneopterin triphosphate.</text>
</comment>
<comment type="catalytic activity">
    <reaction evidence="1">
        <text>GTP + H2O = 7,8-dihydroneopterin 3'-triphosphate + formate + H(+)</text>
        <dbReference type="Rhea" id="RHEA:17473"/>
        <dbReference type="ChEBI" id="CHEBI:15377"/>
        <dbReference type="ChEBI" id="CHEBI:15378"/>
        <dbReference type="ChEBI" id="CHEBI:15740"/>
        <dbReference type="ChEBI" id="CHEBI:37565"/>
        <dbReference type="ChEBI" id="CHEBI:58462"/>
        <dbReference type="EC" id="3.5.4.16"/>
    </reaction>
</comment>
<comment type="pathway">
    <text evidence="1">Cofactor biosynthesis; 7,8-dihydroneopterin triphosphate biosynthesis; 7,8-dihydroneopterin triphosphate from GTP: step 1/1.</text>
</comment>
<comment type="similarity">
    <text evidence="1">Belongs to the GTP cyclohydrolase IV family.</text>
</comment>
<accession>Q6GBS1</accession>
<reference key="1">
    <citation type="journal article" date="2004" name="Proc. Natl. Acad. Sci. U.S.A.">
        <title>Complete genomes of two clinical Staphylococcus aureus strains: evidence for the rapid evolution of virulence and drug resistance.</title>
        <authorList>
            <person name="Holden M.T.G."/>
            <person name="Feil E.J."/>
            <person name="Lindsay J.A."/>
            <person name="Peacock S.J."/>
            <person name="Day N.P.J."/>
            <person name="Enright M.C."/>
            <person name="Foster T.J."/>
            <person name="Moore C.E."/>
            <person name="Hurst L."/>
            <person name="Atkin R."/>
            <person name="Barron A."/>
            <person name="Bason N."/>
            <person name="Bentley S.D."/>
            <person name="Chillingworth C."/>
            <person name="Chillingworth T."/>
            <person name="Churcher C."/>
            <person name="Clark L."/>
            <person name="Corton C."/>
            <person name="Cronin A."/>
            <person name="Doggett J."/>
            <person name="Dowd L."/>
            <person name="Feltwell T."/>
            <person name="Hance Z."/>
            <person name="Harris B."/>
            <person name="Hauser H."/>
            <person name="Holroyd S."/>
            <person name="Jagels K."/>
            <person name="James K.D."/>
            <person name="Lennard N."/>
            <person name="Line A."/>
            <person name="Mayes R."/>
            <person name="Moule S."/>
            <person name="Mungall K."/>
            <person name="Ormond D."/>
            <person name="Quail M.A."/>
            <person name="Rabbinowitsch E."/>
            <person name="Rutherford K.M."/>
            <person name="Sanders M."/>
            <person name="Sharp S."/>
            <person name="Simmonds M."/>
            <person name="Stevens K."/>
            <person name="Whitehead S."/>
            <person name="Barrell B.G."/>
            <person name="Spratt B.G."/>
            <person name="Parkhill J."/>
        </authorList>
    </citation>
    <scope>NUCLEOTIDE SEQUENCE [LARGE SCALE GENOMIC DNA]</scope>
    <source>
        <strain>MSSA476</strain>
    </source>
</reference>